<protein>
    <recommendedName>
        <fullName evidence="1">Ribosomal protein uS12 methylthiotransferase RimO</fullName>
        <shortName evidence="1">uS12 MTTase</shortName>
        <shortName evidence="1">uS12 methylthiotransferase</shortName>
        <ecNumber evidence="1">2.8.4.4</ecNumber>
    </recommendedName>
    <alternativeName>
        <fullName evidence="1">Ribosomal protein uS12 (aspartate-C(3))-methylthiotransferase</fullName>
    </alternativeName>
    <alternativeName>
        <fullName evidence="1">Ribosome maturation factor RimO</fullName>
    </alternativeName>
</protein>
<evidence type="ECO:0000255" key="1">
    <source>
        <dbReference type="HAMAP-Rule" id="MF_01865"/>
    </source>
</evidence>
<evidence type="ECO:0000255" key="2">
    <source>
        <dbReference type="PROSITE-ProRule" id="PRU01266"/>
    </source>
</evidence>
<comment type="function">
    <text evidence="1">Catalyzes the methylthiolation of an aspartic acid residue of ribosomal protein uS12.</text>
</comment>
<comment type="catalytic activity">
    <reaction evidence="1">
        <text>L-aspartate(89)-[ribosomal protein uS12]-hydrogen + (sulfur carrier)-SH + AH2 + 2 S-adenosyl-L-methionine = 3-methylsulfanyl-L-aspartate(89)-[ribosomal protein uS12]-hydrogen + (sulfur carrier)-H + 5'-deoxyadenosine + L-methionine + A + S-adenosyl-L-homocysteine + 2 H(+)</text>
        <dbReference type="Rhea" id="RHEA:37087"/>
        <dbReference type="Rhea" id="RHEA-COMP:10460"/>
        <dbReference type="Rhea" id="RHEA-COMP:10461"/>
        <dbReference type="Rhea" id="RHEA-COMP:14737"/>
        <dbReference type="Rhea" id="RHEA-COMP:14739"/>
        <dbReference type="ChEBI" id="CHEBI:13193"/>
        <dbReference type="ChEBI" id="CHEBI:15378"/>
        <dbReference type="ChEBI" id="CHEBI:17319"/>
        <dbReference type="ChEBI" id="CHEBI:17499"/>
        <dbReference type="ChEBI" id="CHEBI:29917"/>
        <dbReference type="ChEBI" id="CHEBI:29961"/>
        <dbReference type="ChEBI" id="CHEBI:57844"/>
        <dbReference type="ChEBI" id="CHEBI:57856"/>
        <dbReference type="ChEBI" id="CHEBI:59789"/>
        <dbReference type="ChEBI" id="CHEBI:64428"/>
        <dbReference type="ChEBI" id="CHEBI:73599"/>
        <dbReference type="EC" id="2.8.4.4"/>
    </reaction>
</comment>
<comment type="cofactor">
    <cofactor evidence="1">
        <name>[4Fe-4S] cluster</name>
        <dbReference type="ChEBI" id="CHEBI:49883"/>
    </cofactor>
    <text evidence="1">Binds 2 [4Fe-4S] clusters. One cluster is coordinated with 3 cysteines and an exchangeable S-adenosyl-L-methionine.</text>
</comment>
<comment type="subcellular location">
    <subcellularLocation>
        <location evidence="1">Cytoplasm</location>
    </subcellularLocation>
</comment>
<comment type="similarity">
    <text evidence="1">Belongs to the methylthiotransferase family. RimO subfamily.</text>
</comment>
<accession>B6JLW7</accession>
<gene>
    <name evidence="1" type="primary">rimO</name>
    <name type="ordered locus">HPP12_0743</name>
</gene>
<proteinExistence type="inferred from homology"/>
<reference key="1">
    <citation type="submission" date="2008-10" db="EMBL/GenBank/DDBJ databases">
        <title>The complete genome sequence of Helicobacter pylori strain P12.</title>
        <authorList>
            <person name="Fischer W."/>
            <person name="Windhager L."/>
            <person name="Karnholz A."/>
            <person name="Zeiller M."/>
            <person name="Zimmer R."/>
            <person name="Haas R."/>
        </authorList>
    </citation>
    <scope>NUCLEOTIDE SEQUENCE [LARGE SCALE GENOMIC DNA]</scope>
    <source>
        <strain>P12</strain>
    </source>
</reference>
<name>RIMO_HELP2</name>
<dbReference type="EC" id="2.8.4.4" evidence="1"/>
<dbReference type="EMBL" id="CP001217">
    <property type="protein sequence ID" value="ACJ07895.1"/>
    <property type="molecule type" value="Genomic_DNA"/>
</dbReference>
<dbReference type="SMR" id="B6JLW7"/>
<dbReference type="KEGG" id="hpp:HPP12_0743"/>
<dbReference type="HOGENOM" id="CLU_018697_0_1_7"/>
<dbReference type="Proteomes" id="UP000008198">
    <property type="component" value="Chromosome"/>
</dbReference>
<dbReference type="GO" id="GO:0005829">
    <property type="term" value="C:cytosol"/>
    <property type="evidence" value="ECO:0007669"/>
    <property type="project" value="TreeGrafter"/>
</dbReference>
<dbReference type="GO" id="GO:0051539">
    <property type="term" value="F:4 iron, 4 sulfur cluster binding"/>
    <property type="evidence" value="ECO:0007669"/>
    <property type="project" value="UniProtKB-UniRule"/>
</dbReference>
<dbReference type="GO" id="GO:0035599">
    <property type="term" value="F:aspartic acid methylthiotransferase activity"/>
    <property type="evidence" value="ECO:0007669"/>
    <property type="project" value="TreeGrafter"/>
</dbReference>
<dbReference type="GO" id="GO:0046872">
    <property type="term" value="F:metal ion binding"/>
    <property type="evidence" value="ECO:0007669"/>
    <property type="project" value="UniProtKB-KW"/>
</dbReference>
<dbReference type="GO" id="GO:0103039">
    <property type="term" value="F:protein methylthiotransferase activity"/>
    <property type="evidence" value="ECO:0007669"/>
    <property type="project" value="UniProtKB-EC"/>
</dbReference>
<dbReference type="GO" id="GO:0006400">
    <property type="term" value="P:tRNA modification"/>
    <property type="evidence" value="ECO:0007669"/>
    <property type="project" value="InterPro"/>
</dbReference>
<dbReference type="CDD" id="cd01335">
    <property type="entry name" value="Radical_SAM"/>
    <property type="match status" value="1"/>
</dbReference>
<dbReference type="FunFam" id="3.40.50.12160:FF:000010">
    <property type="entry name" value="Ribosomal protein S12 methylthiotransferase RimO"/>
    <property type="match status" value="1"/>
</dbReference>
<dbReference type="FunFam" id="3.80.30.20:FF:000015">
    <property type="entry name" value="Ribosomal protein S12 methylthiotransferase RimO"/>
    <property type="match status" value="1"/>
</dbReference>
<dbReference type="Gene3D" id="3.40.50.12160">
    <property type="entry name" value="Methylthiotransferase, N-terminal domain"/>
    <property type="match status" value="1"/>
</dbReference>
<dbReference type="Gene3D" id="3.80.30.20">
    <property type="entry name" value="tm_1862 like domain"/>
    <property type="match status" value="1"/>
</dbReference>
<dbReference type="HAMAP" id="MF_01865">
    <property type="entry name" value="MTTase_RimO"/>
    <property type="match status" value="1"/>
</dbReference>
<dbReference type="InterPro" id="IPR006638">
    <property type="entry name" value="Elp3/MiaA/NifB-like_rSAM"/>
</dbReference>
<dbReference type="InterPro" id="IPR005839">
    <property type="entry name" value="Methylthiotransferase"/>
</dbReference>
<dbReference type="InterPro" id="IPR020612">
    <property type="entry name" value="Methylthiotransferase_CS"/>
</dbReference>
<dbReference type="InterPro" id="IPR013848">
    <property type="entry name" value="Methylthiotransferase_N"/>
</dbReference>
<dbReference type="InterPro" id="IPR038135">
    <property type="entry name" value="Methylthiotransferase_N_sf"/>
</dbReference>
<dbReference type="InterPro" id="IPR005840">
    <property type="entry name" value="Ribosomal_uS12_MeSTrfase_RimO"/>
</dbReference>
<dbReference type="InterPro" id="IPR007197">
    <property type="entry name" value="rSAM"/>
</dbReference>
<dbReference type="InterPro" id="IPR023404">
    <property type="entry name" value="rSAM_horseshoe"/>
</dbReference>
<dbReference type="NCBIfam" id="TIGR01125">
    <property type="entry name" value="30S ribosomal protein S12 methylthiotransferase RimO"/>
    <property type="match status" value="1"/>
</dbReference>
<dbReference type="NCBIfam" id="TIGR00089">
    <property type="entry name" value="MiaB/RimO family radical SAM methylthiotransferase"/>
    <property type="match status" value="1"/>
</dbReference>
<dbReference type="PANTHER" id="PTHR43837">
    <property type="entry name" value="RIBOSOMAL PROTEIN S12 METHYLTHIOTRANSFERASE RIMO"/>
    <property type="match status" value="1"/>
</dbReference>
<dbReference type="PANTHER" id="PTHR43837:SF1">
    <property type="entry name" value="RIBOSOMAL PROTEIN US12 METHYLTHIOTRANSFERASE RIMO"/>
    <property type="match status" value="1"/>
</dbReference>
<dbReference type="Pfam" id="PF04055">
    <property type="entry name" value="Radical_SAM"/>
    <property type="match status" value="1"/>
</dbReference>
<dbReference type="Pfam" id="PF00919">
    <property type="entry name" value="UPF0004"/>
    <property type="match status" value="1"/>
</dbReference>
<dbReference type="SFLD" id="SFLDG01082">
    <property type="entry name" value="B12-binding_domain_containing"/>
    <property type="match status" value="1"/>
</dbReference>
<dbReference type="SFLD" id="SFLDS00029">
    <property type="entry name" value="Radical_SAM"/>
    <property type="match status" value="1"/>
</dbReference>
<dbReference type="SFLD" id="SFLDF00274">
    <property type="entry name" value="ribosomal_protein_S12_methylth"/>
    <property type="match status" value="1"/>
</dbReference>
<dbReference type="SMART" id="SM00729">
    <property type="entry name" value="Elp3"/>
    <property type="match status" value="1"/>
</dbReference>
<dbReference type="SUPFAM" id="SSF102114">
    <property type="entry name" value="Radical SAM enzymes"/>
    <property type="match status" value="1"/>
</dbReference>
<dbReference type="PROSITE" id="PS51449">
    <property type="entry name" value="MTTASE_N"/>
    <property type="match status" value="1"/>
</dbReference>
<dbReference type="PROSITE" id="PS01278">
    <property type="entry name" value="MTTASE_RADICAL"/>
    <property type="match status" value="1"/>
</dbReference>
<dbReference type="PROSITE" id="PS51918">
    <property type="entry name" value="RADICAL_SAM"/>
    <property type="match status" value="1"/>
</dbReference>
<keyword id="KW-0004">4Fe-4S</keyword>
<keyword id="KW-0963">Cytoplasm</keyword>
<keyword id="KW-0408">Iron</keyword>
<keyword id="KW-0411">Iron-sulfur</keyword>
<keyword id="KW-0479">Metal-binding</keyword>
<keyword id="KW-0949">S-adenosyl-L-methionine</keyword>
<keyword id="KW-0808">Transferase</keyword>
<organism>
    <name type="scientific">Helicobacter pylori (strain P12)</name>
    <dbReference type="NCBI Taxonomy" id="570508"/>
    <lineage>
        <taxon>Bacteria</taxon>
        <taxon>Pseudomonadati</taxon>
        <taxon>Campylobacterota</taxon>
        <taxon>Epsilonproteobacteria</taxon>
        <taxon>Campylobacterales</taxon>
        <taxon>Helicobacteraceae</taxon>
        <taxon>Helicobacter</taxon>
    </lineage>
</organism>
<feature type="chain" id="PRO_0000374859" description="Ribosomal protein uS12 methylthiotransferase RimO">
    <location>
        <begin position="1"/>
        <end position="439"/>
    </location>
</feature>
<feature type="domain" description="MTTase N-terminal" evidence="1">
    <location>
        <begin position="7"/>
        <end position="119"/>
    </location>
</feature>
<feature type="domain" description="Radical SAM core" evidence="2">
    <location>
        <begin position="137"/>
        <end position="368"/>
    </location>
</feature>
<feature type="binding site" evidence="1">
    <location>
        <position position="16"/>
    </location>
    <ligand>
        <name>[4Fe-4S] cluster</name>
        <dbReference type="ChEBI" id="CHEBI:49883"/>
        <label>1</label>
    </ligand>
</feature>
<feature type="binding site" evidence="1">
    <location>
        <position position="50"/>
    </location>
    <ligand>
        <name>[4Fe-4S] cluster</name>
        <dbReference type="ChEBI" id="CHEBI:49883"/>
        <label>1</label>
    </ligand>
</feature>
<feature type="binding site" evidence="1">
    <location>
        <position position="82"/>
    </location>
    <ligand>
        <name>[4Fe-4S] cluster</name>
        <dbReference type="ChEBI" id="CHEBI:49883"/>
        <label>1</label>
    </ligand>
</feature>
<feature type="binding site" evidence="1">
    <location>
        <position position="151"/>
    </location>
    <ligand>
        <name>[4Fe-4S] cluster</name>
        <dbReference type="ChEBI" id="CHEBI:49883"/>
        <label>2</label>
        <note>4Fe-4S-S-AdoMet</note>
    </ligand>
</feature>
<feature type="binding site" evidence="1">
    <location>
        <position position="155"/>
    </location>
    <ligand>
        <name>[4Fe-4S] cluster</name>
        <dbReference type="ChEBI" id="CHEBI:49883"/>
        <label>2</label>
        <note>4Fe-4S-S-AdoMet</note>
    </ligand>
</feature>
<feature type="binding site" evidence="1">
    <location>
        <position position="158"/>
    </location>
    <ligand>
        <name>[4Fe-4S] cluster</name>
        <dbReference type="ChEBI" id="CHEBI:49883"/>
        <label>2</label>
        <note>4Fe-4S-S-AdoMet</note>
    </ligand>
</feature>
<sequence>MQIKENKQLCLISLGCSKNLVDSEVMLGKLYNYTLTNDAKSADVILINTCGFIESAKQESIQTILNAAKDKKRGAILIASGCLSERYKDEIKELIPEVDIFTGVGDYDKIDIMIAKKQNQFSEQVFLSEHYNARIITGSSVHAYVKISEGCNQKCSFCAIPSFKGKLQSRELNSILKEVENLALKGYKDMTFIAQDSSSFLYDKGQKDGLIQLISAIDKQQALKSARILYLYPSSTTLELIGAIESSPIFQNYFDMPIQHISDSMLKKMRRNSSQAHHLKLLDAMKQVKESFIRSTIIVGHPEENEGEFEELSAFLDEFQFDRLNIFAFSAEENTHAYSLEKVPKKTINARIKALNKIALKHQNHSFKALLNKPIKALVENKEGEYFYKARDLRWAPEVDGEILINDSALTTPLQPGHYTIVPSVFKDNILLAKVLSPF</sequence>